<feature type="chain" id="PRO_0000285577" description="Calsenilin">
    <location>
        <begin position="1"/>
        <end position="256"/>
    </location>
</feature>
<feature type="domain" description="EF-hand 1; degenerate" evidence="7">
    <location>
        <begin position="67"/>
        <end position="123"/>
    </location>
</feature>
<feature type="domain" description="EF-hand 2" evidence="5">
    <location>
        <begin position="126"/>
        <end position="161"/>
    </location>
</feature>
<feature type="domain" description="EF-hand 3" evidence="5">
    <location>
        <begin position="162"/>
        <end position="197"/>
    </location>
</feature>
<feature type="domain" description="EF-hand 4" evidence="5">
    <location>
        <begin position="210"/>
        <end position="245"/>
    </location>
</feature>
<feature type="region of interest" description="Disordered" evidence="6">
    <location>
        <begin position="1"/>
        <end position="30"/>
    </location>
</feature>
<feature type="region of interest" description="Interaction with KCND2" evidence="1">
    <location>
        <begin position="243"/>
        <end position="256"/>
    </location>
</feature>
<feature type="binding site" evidence="5">
    <location>
        <position position="175"/>
    </location>
    <ligand>
        <name>Ca(2+)</name>
        <dbReference type="ChEBI" id="CHEBI:29108"/>
        <label>1</label>
    </ligand>
</feature>
<feature type="binding site" evidence="5">
    <location>
        <position position="177"/>
    </location>
    <ligand>
        <name>Ca(2+)</name>
        <dbReference type="ChEBI" id="CHEBI:29108"/>
        <label>1</label>
    </ligand>
</feature>
<feature type="binding site" evidence="5">
    <location>
        <position position="179"/>
    </location>
    <ligand>
        <name>Ca(2+)</name>
        <dbReference type="ChEBI" id="CHEBI:29108"/>
        <label>1</label>
    </ligand>
</feature>
<feature type="binding site" evidence="5">
    <location>
        <position position="181"/>
    </location>
    <ligand>
        <name>Ca(2+)</name>
        <dbReference type="ChEBI" id="CHEBI:29108"/>
        <label>1</label>
    </ligand>
</feature>
<feature type="binding site" evidence="5">
    <location>
        <position position="186"/>
    </location>
    <ligand>
        <name>Ca(2+)</name>
        <dbReference type="ChEBI" id="CHEBI:29108"/>
        <label>1</label>
    </ligand>
</feature>
<feature type="binding site" evidence="5">
    <location>
        <position position="223"/>
    </location>
    <ligand>
        <name>Ca(2+)</name>
        <dbReference type="ChEBI" id="CHEBI:29108"/>
        <label>2</label>
    </ligand>
</feature>
<feature type="binding site" evidence="5">
    <location>
        <position position="225"/>
    </location>
    <ligand>
        <name>Ca(2+)</name>
        <dbReference type="ChEBI" id="CHEBI:29108"/>
        <label>2</label>
    </ligand>
</feature>
<feature type="binding site" evidence="5">
    <location>
        <position position="227"/>
    </location>
    <ligand>
        <name>Ca(2+)</name>
        <dbReference type="ChEBI" id="CHEBI:29108"/>
        <label>2</label>
    </ligand>
</feature>
<feature type="binding site" evidence="5">
    <location>
        <position position="234"/>
    </location>
    <ligand>
        <name>Ca(2+)</name>
        <dbReference type="ChEBI" id="CHEBI:29108"/>
        <label>2</label>
    </ligand>
</feature>
<feature type="modified residue" description="Phosphoserine" evidence="2">
    <location>
        <position position="14"/>
    </location>
</feature>
<feature type="modified residue" description="Phosphoserine" evidence="3">
    <location>
        <position position="60"/>
    </location>
</feature>
<feature type="modified residue" description="Phosphoserine" evidence="4">
    <location>
        <position position="63"/>
    </location>
</feature>
<feature type="lipid moiety-binding region" description="S-palmitoyl cysteine" evidence="1">
    <location>
        <position position="45"/>
    </location>
</feature>
<feature type="lipid moiety-binding region" description="S-palmitoyl cysteine" evidence="1">
    <location>
        <position position="46"/>
    </location>
</feature>
<feature type="cross-link" description="Glycyl lysine isopeptide (Lys-Gly) (interchain with G-Cter in SUMO1)" evidence="4">
    <location>
        <position position="26"/>
    </location>
</feature>
<feature type="cross-link" description="Glycyl lysine isopeptide (Lys-Gly) (interchain with G-Cter in SUMO1)" evidence="4">
    <location>
        <position position="90"/>
    </location>
</feature>
<comment type="function">
    <text evidence="4">Regulatory subunit of Kv4/D (Shal)-type voltage-gated rapidly inactivating A-type potassium channels, such as KCND2/Kv4.2 and KCND3/Kv4.3. Modulates channel expression at the cell membrane, gating characteristics, inactivation kinetics and rate of recovery from inactivation in a calcium-dependent and isoform-specific manner.</text>
</comment>
<comment type="function">
    <text evidence="4">May play a role in the regulation of PSEN2 proteolytic processing and apoptosis. Together with PSEN2 involved in modulation of amyloid-beta formation (By similarity).</text>
</comment>
<comment type="function">
    <text evidence="3">Calcium-dependent transcriptional repressor that binds to the DRE element of genes including PDYN and FOS. Affinity for DNA is reduced upon binding to calcium and enhanced by binding to magnesium. Seems to be involved in nociception (By similarity).</text>
</comment>
<comment type="subunit">
    <text evidence="3">Binds to DNA as a homomultimer. Dimerization is induced by binding to calcium. Interacts with the C-terminus of PSEN1 and PSEN2 and with PSEN2 CTF subunit. Associates with KCN1. Component of heteromultimeric potassium channels. Identified in potassium channel complexes containing KCND1, KCND2, KCND3, KCNIP1, KCNIP2, KCNIP3, KCNIP4, DPP6 and DPP10. Interacts with KCND2 and KCND3.</text>
</comment>
<comment type="subcellular location">
    <subcellularLocation>
        <location evidence="4">Cytoplasm</location>
    </subcellularLocation>
    <subcellularLocation>
        <location evidence="4">Cell membrane</location>
        <topology evidence="1">Lipid-anchor</topology>
    </subcellularLocation>
    <subcellularLocation>
        <location evidence="4">Endoplasmic reticulum</location>
    </subcellularLocation>
    <subcellularLocation>
        <location evidence="4">Golgi apparatus</location>
    </subcellularLocation>
    <subcellularLocation>
        <location evidence="4">Nucleus</location>
    </subcellularLocation>
    <text evidence="4">Also membrane-bound, associated with the plasma membrane. In the presence of PSEN2 associated with the endoplasmic reticulum and Golgi. The sumoylated form is present only in the nucleus.</text>
</comment>
<comment type="PTM">
    <text evidence="1">Palmitoylated. Palmitoylation enhances association with the plasma membrane (By similarity).</text>
</comment>
<comment type="PTM">
    <text>Proteolytically cleaved by caspase-3.</text>
</comment>
<comment type="similarity">
    <text evidence="7">Belongs to the recoverin family.</text>
</comment>
<name>CSEN_BOVIN</name>
<evidence type="ECO:0000250" key="1"/>
<evidence type="ECO:0000250" key="2">
    <source>
        <dbReference type="UniProtKB" id="Q9JM47"/>
    </source>
</evidence>
<evidence type="ECO:0000250" key="3">
    <source>
        <dbReference type="UniProtKB" id="Q9QXT8"/>
    </source>
</evidence>
<evidence type="ECO:0000250" key="4">
    <source>
        <dbReference type="UniProtKB" id="Q9Y2W7"/>
    </source>
</evidence>
<evidence type="ECO:0000255" key="5">
    <source>
        <dbReference type="PROSITE-ProRule" id="PRU00448"/>
    </source>
</evidence>
<evidence type="ECO:0000256" key="6">
    <source>
        <dbReference type="SAM" id="MobiDB-lite"/>
    </source>
</evidence>
<evidence type="ECO:0000305" key="7"/>
<protein>
    <recommendedName>
        <fullName>Calsenilin</fullName>
    </recommendedName>
    <alternativeName>
        <fullName>A-type potassium channel modulatory protein 3</fullName>
    </alternativeName>
    <alternativeName>
        <fullName>Kv channel-interacting protein 3</fullName>
        <shortName>KChIP3</shortName>
    </alternativeName>
</protein>
<accession>Q17QD9</accession>
<dbReference type="EMBL" id="BC118417">
    <property type="protein sequence ID" value="AAI18418.1"/>
    <property type="molecule type" value="mRNA"/>
</dbReference>
<dbReference type="RefSeq" id="NP_001069080.1">
    <property type="nucleotide sequence ID" value="NM_001075612.2"/>
</dbReference>
<dbReference type="BMRB" id="Q17QD9"/>
<dbReference type="SMR" id="Q17QD9"/>
<dbReference type="FunCoup" id="Q17QD9">
    <property type="interactions" value="476"/>
</dbReference>
<dbReference type="STRING" id="9913.ENSBTAP00000065904"/>
<dbReference type="PaxDb" id="9913-ENSBTAP00000023873"/>
<dbReference type="GeneID" id="513316"/>
<dbReference type="KEGG" id="bta:513316"/>
<dbReference type="CTD" id="30818"/>
<dbReference type="eggNOG" id="KOG0044">
    <property type="taxonomic scope" value="Eukaryota"/>
</dbReference>
<dbReference type="InParanoid" id="Q17QD9"/>
<dbReference type="OrthoDB" id="191686at2759"/>
<dbReference type="Proteomes" id="UP000009136">
    <property type="component" value="Unplaced"/>
</dbReference>
<dbReference type="GO" id="GO:0005829">
    <property type="term" value="C:cytosol"/>
    <property type="evidence" value="ECO:0000250"/>
    <property type="project" value="UniProtKB"/>
</dbReference>
<dbReference type="GO" id="GO:0005783">
    <property type="term" value="C:endoplasmic reticulum"/>
    <property type="evidence" value="ECO:0007669"/>
    <property type="project" value="UniProtKB-SubCell"/>
</dbReference>
<dbReference type="GO" id="GO:0005794">
    <property type="term" value="C:Golgi apparatus"/>
    <property type="evidence" value="ECO:0007669"/>
    <property type="project" value="UniProtKB-SubCell"/>
</dbReference>
<dbReference type="GO" id="GO:0005634">
    <property type="term" value="C:nucleus"/>
    <property type="evidence" value="ECO:0000318"/>
    <property type="project" value="GO_Central"/>
</dbReference>
<dbReference type="GO" id="GO:0008076">
    <property type="term" value="C:voltage-gated potassium channel complex"/>
    <property type="evidence" value="ECO:0000250"/>
    <property type="project" value="UniProtKB"/>
</dbReference>
<dbReference type="GO" id="GO:0005509">
    <property type="term" value="F:calcium ion binding"/>
    <property type="evidence" value="ECO:0000318"/>
    <property type="project" value="GO_Central"/>
</dbReference>
<dbReference type="GO" id="GO:0001227">
    <property type="term" value="F:DNA-binding transcription repressor activity, RNA polymerase II-specific"/>
    <property type="evidence" value="ECO:0000318"/>
    <property type="project" value="GO_Central"/>
</dbReference>
<dbReference type="GO" id="GO:0005267">
    <property type="term" value="F:potassium channel activity"/>
    <property type="evidence" value="ECO:0007669"/>
    <property type="project" value="UniProtKB-KW"/>
</dbReference>
<dbReference type="GO" id="GO:0015459">
    <property type="term" value="F:potassium channel regulator activity"/>
    <property type="evidence" value="ECO:0000250"/>
    <property type="project" value="UniProtKB"/>
</dbReference>
<dbReference type="GO" id="GO:0000978">
    <property type="term" value="F:RNA polymerase II cis-regulatory region sequence-specific DNA binding"/>
    <property type="evidence" value="ECO:0000318"/>
    <property type="project" value="GO_Central"/>
</dbReference>
<dbReference type="GO" id="GO:0006915">
    <property type="term" value="P:apoptotic process"/>
    <property type="evidence" value="ECO:0007669"/>
    <property type="project" value="UniProtKB-KW"/>
</dbReference>
<dbReference type="GO" id="GO:0000122">
    <property type="term" value="P:negative regulation of transcription by RNA polymerase II"/>
    <property type="evidence" value="ECO:0000318"/>
    <property type="project" value="GO_Central"/>
</dbReference>
<dbReference type="GO" id="GO:0072659">
    <property type="term" value="P:protein localization to plasma membrane"/>
    <property type="evidence" value="ECO:0000250"/>
    <property type="project" value="UniProtKB"/>
</dbReference>
<dbReference type="GO" id="GO:1901379">
    <property type="term" value="P:regulation of potassium ion transmembrane transport"/>
    <property type="evidence" value="ECO:0000250"/>
    <property type="project" value="UniProtKB"/>
</dbReference>
<dbReference type="GO" id="GO:0009966">
    <property type="term" value="P:regulation of signal transduction"/>
    <property type="evidence" value="ECO:0000318"/>
    <property type="project" value="GO_Central"/>
</dbReference>
<dbReference type="CDD" id="cd00051">
    <property type="entry name" value="EFh"/>
    <property type="match status" value="2"/>
</dbReference>
<dbReference type="FunFam" id="1.10.238.10:FF:000043">
    <property type="entry name" value="Kv channel-interacting protein 1 isoform 2"/>
    <property type="match status" value="1"/>
</dbReference>
<dbReference type="Gene3D" id="1.10.238.10">
    <property type="entry name" value="EF-hand"/>
    <property type="match status" value="1"/>
</dbReference>
<dbReference type="InterPro" id="IPR011992">
    <property type="entry name" value="EF-hand-dom_pair"/>
</dbReference>
<dbReference type="InterPro" id="IPR018247">
    <property type="entry name" value="EF_Hand_1_Ca_BS"/>
</dbReference>
<dbReference type="InterPro" id="IPR002048">
    <property type="entry name" value="EF_hand_dom"/>
</dbReference>
<dbReference type="InterPro" id="IPR028846">
    <property type="entry name" value="Recoverin"/>
</dbReference>
<dbReference type="PANTHER" id="PTHR23055">
    <property type="entry name" value="CALCIUM BINDING PROTEINS"/>
    <property type="match status" value="1"/>
</dbReference>
<dbReference type="PANTHER" id="PTHR23055:SF165">
    <property type="entry name" value="CALSENILIN"/>
    <property type="match status" value="1"/>
</dbReference>
<dbReference type="Pfam" id="PF13499">
    <property type="entry name" value="EF-hand_7"/>
    <property type="match status" value="1"/>
</dbReference>
<dbReference type="Pfam" id="PF13833">
    <property type="entry name" value="EF-hand_8"/>
    <property type="match status" value="1"/>
</dbReference>
<dbReference type="PRINTS" id="PR00450">
    <property type="entry name" value="RECOVERIN"/>
</dbReference>
<dbReference type="SMART" id="SM00054">
    <property type="entry name" value="EFh"/>
    <property type="match status" value="3"/>
</dbReference>
<dbReference type="SUPFAM" id="SSF47473">
    <property type="entry name" value="EF-hand"/>
    <property type="match status" value="1"/>
</dbReference>
<dbReference type="PROSITE" id="PS00018">
    <property type="entry name" value="EF_HAND_1"/>
    <property type="match status" value="2"/>
</dbReference>
<dbReference type="PROSITE" id="PS50222">
    <property type="entry name" value="EF_HAND_2"/>
    <property type="match status" value="3"/>
</dbReference>
<reference key="1">
    <citation type="submission" date="2006-06" db="EMBL/GenBank/DDBJ databases">
        <authorList>
            <consortium name="NIH - Mammalian Gene Collection (MGC) project"/>
        </authorList>
    </citation>
    <scope>NUCLEOTIDE SEQUENCE [LARGE SCALE MRNA]</scope>
    <source>
        <strain>Hereford</strain>
        <tissue>Fetal pons</tissue>
    </source>
</reference>
<proteinExistence type="evidence at transcript level"/>
<sequence length="256" mass="29446">MQRAKEVMKVSDGSLLGEPGRTPLSKKEGVKWQRPRLTRQALMRCCLVKWILSSAAPQGSYSSDSELELSAVRHQPEGLDQLQAQTKFTKKELQSLYRGFKNECPTGLVDEDTFKLIYSQFFPQGDATTYAHFLFNAFDADGNGAIRFEDFVVGLSILLRGTVHEKLKWAFNLYDINKDGYITKEEMLAIMKSIYDMMGRHTYPILREDAPLEHVERFFQKMDRNQDGVVTIDEFLETCQKDENIMSSMQLFENVI</sequence>
<gene>
    <name type="primary">KCNIP3</name>
    <name type="synonym">CSEN</name>
</gene>
<organism>
    <name type="scientific">Bos taurus</name>
    <name type="common">Bovine</name>
    <dbReference type="NCBI Taxonomy" id="9913"/>
    <lineage>
        <taxon>Eukaryota</taxon>
        <taxon>Metazoa</taxon>
        <taxon>Chordata</taxon>
        <taxon>Craniata</taxon>
        <taxon>Vertebrata</taxon>
        <taxon>Euteleostomi</taxon>
        <taxon>Mammalia</taxon>
        <taxon>Eutheria</taxon>
        <taxon>Laurasiatheria</taxon>
        <taxon>Artiodactyla</taxon>
        <taxon>Ruminantia</taxon>
        <taxon>Pecora</taxon>
        <taxon>Bovidae</taxon>
        <taxon>Bovinae</taxon>
        <taxon>Bos</taxon>
    </lineage>
</organism>
<keyword id="KW-0053">Apoptosis</keyword>
<keyword id="KW-0106">Calcium</keyword>
<keyword id="KW-1003">Cell membrane</keyword>
<keyword id="KW-0963">Cytoplasm</keyword>
<keyword id="KW-0256">Endoplasmic reticulum</keyword>
<keyword id="KW-0333">Golgi apparatus</keyword>
<keyword id="KW-0407">Ion channel</keyword>
<keyword id="KW-0406">Ion transport</keyword>
<keyword id="KW-1017">Isopeptide bond</keyword>
<keyword id="KW-0449">Lipoprotein</keyword>
<keyword id="KW-0472">Membrane</keyword>
<keyword id="KW-0479">Metal-binding</keyword>
<keyword id="KW-0539">Nucleus</keyword>
<keyword id="KW-0564">Palmitate</keyword>
<keyword id="KW-0597">Phosphoprotein</keyword>
<keyword id="KW-0630">Potassium</keyword>
<keyword id="KW-0631">Potassium channel</keyword>
<keyword id="KW-0633">Potassium transport</keyword>
<keyword id="KW-1185">Reference proteome</keyword>
<keyword id="KW-0677">Repeat</keyword>
<keyword id="KW-0678">Repressor</keyword>
<keyword id="KW-0804">Transcription</keyword>
<keyword id="KW-0805">Transcription regulation</keyword>
<keyword id="KW-0813">Transport</keyword>
<keyword id="KW-0832">Ubl conjugation</keyword>
<keyword id="KW-0851">Voltage-gated channel</keyword>